<dbReference type="EC" id="2.7.11.1"/>
<dbReference type="EMBL" id="AB006424">
    <property type="protein sequence ID" value="BAA33101.1"/>
    <property type="molecule type" value="Genomic_DNA"/>
</dbReference>
<dbReference type="EMBL" id="AL009126">
    <property type="protein sequence ID" value="CAB11997.1"/>
    <property type="molecule type" value="Genomic_DNA"/>
</dbReference>
<dbReference type="PIR" id="H69747">
    <property type="entry name" value="H69747"/>
</dbReference>
<dbReference type="RefSeq" id="NP_388085.1">
    <property type="nucleotide sequence ID" value="NC_000964.3"/>
</dbReference>
<dbReference type="RefSeq" id="WP_003234892.1">
    <property type="nucleotide sequence ID" value="NZ_OZ025638.1"/>
</dbReference>
<dbReference type="SMR" id="O31435"/>
<dbReference type="FunCoup" id="O31435">
    <property type="interactions" value="230"/>
</dbReference>
<dbReference type="IntAct" id="O31435">
    <property type="interactions" value="14"/>
</dbReference>
<dbReference type="STRING" id="224308.BSU02030"/>
<dbReference type="PaxDb" id="224308-BSU02030"/>
<dbReference type="EnsemblBacteria" id="CAB11997">
    <property type="protein sequence ID" value="CAB11997"/>
    <property type="gene ID" value="BSU_02030"/>
</dbReference>
<dbReference type="GeneID" id="938464"/>
<dbReference type="KEGG" id="bsu:BSU02030"/>
<dbReference type="PATRIC" id="fig|224308.179.peg.209"/>
<dbReference type="eggNOG" id="COG0515">
    <property type="taxonomic scope" value="Bacteria"/>
</dbReference>
<dbReference type="InParanoid" id="O31435"/>
<dbReference type="OrthoDB" id="9788659at2"/>
<dbReference type="PhylomeDB" id="O31435"/>
<dbReference type="BioCyc" id="BSUB:BSU02030-MONOMER"/>
<dbReference type="Proteomes" id="UP000001570">
    <property type="component" value="Chromosome"/>
</dbReference>
<dbReference type="GO" id="GO:0005524">
    <property type="term" value="F:ATP binding"/>
    <property type="evidence" value="ECO:0007669"/>
    <property type="project" value="UniProtKB-KW"/>
</dbReference>
<dbReference type="GO" id="GO:0106310">
    <property type="term" value="F:protein serine kinase activity"/>
    <property type="evidence" value="ECO:0007669"/>
    <property type="project" value="RHEA"/>
</dbReference>
<dbReference type="GO" id="GO:0004674">
    <property type="term" value="F:protein serine/threonine kinase activity"/>
    <property type="evidence" value="ECO:0000318"/>
    <property type="project" value="GO_Central"/>
</dbReference>
<dbReference type="Gene3D" id="3.30.200.20">
    <property type="entry name" value="Phosphorylase Kinase, domain 1"/>
    <property type="match status" value="1"/>
</dbReference>
<dbReference type="Gene3D" id="1.10.510.10">
    <property type="entry name" value="Transferase(Phosphotransferase) domain 1"/>
    <property type="match status" value="1"/>
</dbReference>
<dbReference type="InterPro" id="IPR011009">
    <property type="entry name" value="Kinase-like_dom_sf"/>
</dbReference>
<dbReference type="InterPro" id="IPR000719">
    <property type="entry name" value="Prot_kinase_dom"/>
</dbReference>
<dbReference type="InterPro" id="IPR017441">
    <property type="entry name" value="Protein_kinase_ATP_BS"/>
</dbReference>
<dbReference type="PANTHER" id="PTHR24363">
    <property type="entry name" value="SERINE/THREONINE PROTEIN KINASE"/>
    <property type="match status" value="1"/>
</dbReference>
<dbReference type="PANTHER" id="PTHR24363:SF0">
    <property type="entry name" value="SERINE_THREONINE KINASE LIKE DOMAIN CONTAINING 1"/>
    <property type="match status" value="1"/>
</dbReference>
<dbReference type="Pfam" id="PF00069">
    <property type="entry name" value="Pkinase"/>
    <property type="match status" value="1"/>
</dbReference>
<dbReference type="SUPFAM" id="SSF56112">
    <property type="entry name" value="Protein kinase-like (PK-like)"/>
    <property type="match status" value="1"/>
</dbReference>
<dbReference type="PROSITE" id="PS00107">
    <property type="entry name" value="PROTEIN_KINASE_ATP"/>
    <property type="match status" value="1"/>
</dbReference>
<dbReference type="PROSITE" id="PS50011">
    <property type="entry name" value="PROTEIN_KINASE_DOM"/>
    <property type="match status" value="1"/>
</dbReference>
<gene>
    <name type="primary">ybdM</name>
    <name type="ordered locus">BSU02030</name>
</gene>
<sequence>MALKLLKKLLFDRPLKNGVILNHQYKIEECLGMGGYGLVYLCTDILAQTPYVLKQLRPTKAKKEKEKVRFQQEIKLLKNIHHPQIPGFIDEFIIDGQAYYVMQFIEGENIEELLFFRKQPFTELMALQLISQLLEIIEYLHDRLIFHSDIRTPNIIINDGRLCLIDFGLAKQLTPEEMEEIKVRKQDDFFDLGETLLFLLYSQYKGKKKKNGTWLEELTLTKEVTLLLKRLLGIEEEYQHTASIREDLNRAIQSVT</sequence>
<evidence type="ECO:0000255" key="1">
    <source>
        <dbReference type="PROSITE-ProRule" id="PRU00159"/>
    </source>
</evidence>
<proteinExistence type="evidence at protein level"/>
<protein>
    <recommendedName>
        <fullName>Probable serine/threonine-protein kinase YbdM</fullName>
        <ecNumber>2.7.11.1</ecNumber>
    </recommendedName>
</protein>
<feature type="chain" id="PRO_0000360793" description="Probable serine/threonine-protein kinase YbdM">
    <location>
        <begin position="1"/>
        <end position="256"/>
    </location>
</feature>
<feature type="domain" description="Protein kinase" evidence="1">
    <location>
        <begin position="25"/>
        <end position="256"/>
    </location>
</feature>
<feature type="active site" description="Proton acceptor" evidence="1">
    <location>
        <position position="149"/>
    </location>
</feature>
<feature type="binding site" evidence="1">
    <location>
        <begin position="31"/>
        <end position="39"/>
    </location>
    <ligand>
        <name>ATP</name>
        <dbReference type="ChEBI" id="CHEBI:30616"/>
    </ligand>
</feature>
<feature type="binding site" evidence="1">
    <location>
        <position position="54"/>
    </location>
    <ligand>
        <name>ATP</name>
        <dbReference type="ChEBI" id="CHEBI:30616"/>
    </ligand>
</feature>
<accession>O31435</accession>
<accession>Q7DL55</accession>
<organism>
    <name type="scientific">Bacillus subtilis (strain 168)</name>
    <dbReference type="NCBI Taxonomy" id="224308"/>
    <lineage>
        <taxon>Bacteria</taxon>
        <taxon>Bacillati</taxon>
        <taxon>Bacillota</taxon>
        <taxon>Bacilli</taxon>
        <taxon>Bacillales</taxon>
        <taxon>Bacillaceae</taxon>
        <taxon>Bacillus</taxon>
    </lineage>
</organism>
<reference key="1">
    <citation type="submission" date="1997-07" db="EMBL/GenBank/DDBJ databases">
        <title>Sequence analysis of the 70kb region between 17 and 23 degree of the Bacillus subtilis chromosome.</title>
        <authorList>
            <person name="Haga K."/>
            <person name="Liu H."/>
            <person name="Yasumoto K."/>
            <person name="Takahashi H."/>
            <person name="Yoshikawa H."/>
        </authorList>
    </citation>
    <scope>NUCLEOTIDE SEQUENCE [GENOMIC DNA]</scope>
    <source>
        <strain>168</strain>
    </source>
</reference>
<reference key="2">
    <citation type="journal article" date="1997" name="Nature">
        <title>The complete genome sequence of the Gram-positive bacterium Bacillus subtilis.</title>
        <authorList>
            <person name="Kunst F."/>
            <person name="Ogasawara N."/>
            <person name="Moszer I."/>
            <person name="Albertini A.M."/>
            <person name="Alloni G."/>
            <person name="Azevedo V."/>
            <person name="Bertero M.G."/>
            <person name="Bessieres P."/>
            <person name="Bolotin A."/>
            <person name="Borchert S."/>
            <person name="Borriss R."/>
            <person name="Boursier L."/>
            <person name="Brans A."/>
            <person name="Braun M."/>
            <person name="Brignell S.C."/>
            <person name="Bron S."/>
            <person name="Brouillet S."/>
            <person name="Bruschi C.V."/>
            <person name="Caldwell B."/>
            <person name="Capuano V."/>
            <person name="Carter N.M."/>
            <person name="Choi S.-K."/>
            <person name="Codani J.-J."/>
            <person name="Connerton I.F."/>
            <person name="Cummings N.J."/>
            <person name="Daniel R.A."/>
            <person name="Denizot F."/>
            <person name="Devine K.M."/>
            <person name="Duesterhoeft A."/>
            <person name="Ehrlich S.D."/>
            <person name="Emmerson P.T."/>
            <person name="Entian K.-D."/>
            <person name="Errington J."/>
            <person name="Fabret C."/>
            <person name="Ferrari E."/>
            <person name="Foulger D."/>
            <person name="Fritz C."/>
            <person name="Fujita M."/>
            <person name="Fujita Y."/>
            <person name="Fuma S."/>
            <person name="Galizzi A."/>
            <person name="Galleron N."/>
            <person name="Ghim S.-Y."/>
            <person name="Glaser P."/>
            <person name="Goffeau A."/>
            <person name="Golightly E.J."/>
            <person name="Grandi G."/>
            <person name="Guiseppi G."/>
            <person name="Guy B.J."/>
            <person name="Haga K."/>
            <person name="Haiech J."/>
            <person name="Harwood C.R."/>
            <person name="Henaut A."/>
            <person name="Hilbert H."/>
            <person name="Holsappel S."/>
            <person name="Hosono S."/>
            <person name="Hullo M.-F."/>
            <person name="Itaya M."/>
            <person name="Jones L.-M."/>
            <person name="Joris B."/>
            <person name="Karamata D."/>
            <person name="Kasahara Y."/>
            <person name="Klaerr-Blanchard M."/>
            <person name="Klein C."/>
            <person name="Kobayashi Y."/>
            <person name="Koetter P."/>
            <person name="Koningstein G."/>
            <person name="Krogh S."/>
            <person name="Kumano M."/>
            <person name="Kurita K."/>
            <person name="Lapidus A."/>
            <person name="Lardinois S."/>
            <person name="Lauber J."/>
            <person name="Lazarevic V."/>
            <person name="Lee S.-M."/>
            <person name="Levine A."/>
            <person name="Liu H."/>
            <person name="Masuda S."/>
            <person name="Mauel C."/>
            <person name="Medigue C."/>
            <person name="Medina N."/>
            <person name="Mellado R.P."/>
            <person name="Mizuno M."/>
            <person name="Moestl D."/>
            <person name="Nakai S."/>
            <person name="Noback M."/>
            <person name="Noone D."/>
            <person name="O'Reilly M."/>
            <person name="Ogawa K."/>
            <person name="Ogiwara A."/>
            <person name="Oudega B."/>
            <person name="Park S.-H."/>
            <person name="Parro V."/>
            <person name="Pohl T.M."/>
            <person name="Portetelle D."/>
            <person name="Porwollik S."/>
            <person name="Prescott A.M."/>
            <person name="Presecan E."/>
            <person name="Pujic P."/>
            <person name="Purnelle B."/>
            <person name="Rapoport G."/>
            <person name="Rey M."/>
            <person name="Reynolds S."/>
            <person name="Rieger M."/>
            <person name="Rivolta C."/>
            <person name="Rocha E."/>
            <person name="Roche B."/>
            <person name="Rose M."/>
            <person name="Sadaie Y."/>
            <person name="Sato T."/>
            <person name="Scanlan E."/>
            <person name="Schleich S."/>
            <person name="Schroeter R."/>
            <person name="Scoffone F."/>
            <person name="Sekiguchi J."/>
            <person name="Sekowska A."/>
            <person name="Seror S.J."/>
            <person name="Serror P."/>
            <person name="Shin B.-S."/>
            <person name="Soldo B."/>
            <person name="Sorokin A."/>
            <person name="Tacconi E."/>
            <person name="Takagi T."/>
            <person name="Takahashi H."/>
            <person name="Takemaru K."/>
            <person name="Takeuchi M."/>
            <person name="Tamakoshi A."/>
            <person name="Tanaka T."/>
            <person name="Terpstra P."/>
            <person name="Tognoni A."/>
            <person name="Tosato V."/>
            <person name="Uchiyama S."/>
            <person name="Vandenbol M."/>
            <person name="Vannier F."/>
            <person name="Vassarotti A."/>
            <person name="Viari A."/>
            <person name="Wambutt R."/>
            <person name="Wedler E."/>
            <person name="Wedler H."/>
            <person name="Weitzenegger T."/>
            <person name="Winters P."/>
            <person name="Wipat A."/>
            <person name="Yamamoto H."/>
            <person name="Yamane K."/>
            <person name="Yasumoto K."/>
            <person name="Yata K."/>
            <person name="Yoshida K."/>
            <person name="Yoshikawa H.-F."/>
            <person name="Zumstein E."/>
            <person name="Yoshikawa H."/>
            <person name="Danchin A."/>
        </authorList>
    </citation>
    <scope>NUCLEOTIDE SEQUENCE [LARGE SCALE GENOMIC DNA]</scope>
    <source>
        <strain>168</strain>
    </source>
</reference>
<comment type="catalytic activity">
    <reaction>
        <text>L-seryl-[protein] + ATP = O-phospho-L-seryl-[protein] + ADP + H(+)</text>
        <dbReference type="Rhea" id="RHEA:17989"/>
        <dbReference type="Rhea" id="RHEA-COMP:9863"/>
        <dbReference type="Rhea" id="RHEA-COMP:11604"/>
        <dbReference type="ChEBI" id="CHEBI:15378"/>
        <dbReference type="ChEBI" id="CHEBI:29999"/>
        <dbReference type="ChEBI" id="CHEBI:30616"/>
        <dbReference type="ChEBI" id="CHEBI:83421"/>
        <dbReference type="ChEBI" id="CHEBI:456216"/>
        <dbReference type="EC" id="2.7.11.1"/>
    </reaction>
</comment>
<comment type="catalytic activity">
    <reaction>
        <text>L-threonyl-[protein] + ATP = O-phospho-L-threonyl-[protein] + ADP + H(+)</text>
        <dbReference type="Rhea" id="RHEA:46608"/>
        <dbReference type="Rhea" id="RHEA-COMP:11060"/>
        <dbReference type="Rhea" id="RHEA-COMP:11605"/>
        <dbReference type="ChEBI" id="CHEBI:15378"/>
        <dbReference type="ChEBI" id="CHEBI:30013"/>
        <dbReference type="ChEBI" id="CHEBI:30616"/>
        <dbReference type="ChEBI" id="CHEBI:61977"/>
        <dbReference type="ChEBI" id="CHEBI:456216"/>
        <dbReference type="EC" id="2.7.11.1"/>
    </reaction>
</comment>
<comment type="interaction">
    <interactant intactId="EBI-5255200">
        <id>O31435</id>
    </interactant>
    <interactant intactId="EBI-2122822">
        <id>P37469</id>
        <label>dnaC</label>
    </interactant>
    <organismsDiffer>false</organismsDiffer>
    <experiments>3</experiments>
</comment>
<comment type="interaction">
    <interactant intactId="EBI-5255200">
        <id>O31435</id>
    </interactant>
    <interactant intactId="EBI-5242785">
        <id>O34483</id>
        <label>hprK</label>
    </interactant>
    <organismsDiffer>false</organismsDiffer>
    <experiments>5</experiments>
</comment>
<comment type="interaction">
    <interactant intactId="EBI-5255200">
        <id>O31435</id>
    </interactant>
    <interactant intactId="EBI-6667154">
        <id>O34507</id>
        <label>prkC</label>
    </interactant>
    <organismsDiffer>false</organismsDiffer>
    <experiments>3</experiments>
</comment>
<comment type="interaction">
    <interactant intactId="EBI-5255200">
        <id>O31435</id>
    </interactant>
    <interactant intactId="EBI-5247957">
        <id>P42411</id>
        <label>rsbT</label>
    </interactant>
    <organismsDiffer>false</organismsDiffer>
    <experiments>3</experiments>
</comment>
<comment type="interaction">
    <interactant intactId="EBI-5255200">
        <id>O31435</id>
    </interactant>
    <interactant intactId="EBI-9344705">
        <id>P10728</id>
        <label>spoIIAB</label>
    </interactant>
    <organismsDiffer>false</organismsDiffer>
    <experiments>2</experiments>
</comment>
<comment type="interaction">
    <interactant intactId="EBI-5255200">
        <id>O31435</id>
    </interactant>
    <interactant intactId="EBI-9303331">
        <id>P37562</id>
        <label>yabT</label>
    </interactant>
    <organismsDiffer>false</organismsDiffer>
    <experiments>2</experiments>
</comment>
<comment type="similarity">
    <text evidence="1">Belongs to the protein kinase superfamily. Ser/Thr protein kinase family.</text>
</comment>
<keyword id="KW-0067">ATP-binding</keyword>
<keyword id="KW-0418">Kinase</keyword>
<keyword id="KW-0547">Nucleotide-binding</keyword>
<keyword id="KW-1185">Reference proteome</keyword>
<keyword id="KW-0723">Serine/threonine-protein kinase</keyword>
<keyword id="KW-0808">Transferase</keyword>
<name>YBDM_BACSU</name>